<protein>
    <recommendedName>
        <fullName evidence="1">Ferredoxin--NADP reductase</fullName>
        <shortName evidence="1">FNR</shortName>
        <shortName evidence="1">Fd-NADP(+) reductase</shortName>
        <ecNumber evidence="1">1.18.1.2</ecNumber>
    </recommendedName>
</protein>
<accession>B3CMJ8</accession>
<gene>
    <name type="ordered locus">WP1010</name>
</gene>
<feature type="chain" id="PRO_0000364983" description="Ferredoxin--NADP reductase">
    <location>
        <begin position="1"/>
        <end position="334"/>
    </location>
</feature>
<feature type="binding site" evidence="1">
    <location>
        <position position="32"/>
    </location>
    <ligand>
        <name>FAD</name>
        <dbReference type="ChEBI" id="CHEBI:57692"/>
    </ligand>
</feature>
<feature type="binding site" evidence="1">
    <location>
        <position position="40"/>
    </location>
    <ligand>
        <name>FAD</name>
        <dbReference type="ChEBI" id="CHEBI:57692"/>
    </ligand>
</feature>
<feature type="binding site" evidence="1">
    <location>
        <position position="45"/>
    </location>
    <ligand>
        <name>FAD</name>
        <dbReference type="ChEBI" id="CHEBI:57692"/>
    </ligand>
</feature>
<feature type="binding site" evidence="1">
    <location>
        <position position="85"/>
    </location>
    <ligand>
        <name>FAD</name>
        <dbReference type="ChEBI" id="CHEBI:57692"/>
    </ligand>
</feature>
<feature type="binding site" evidence="1">
    <location>
        <position position="120"/>
    </location>
    <ligand>
        <name>FAD</name>
        <dbReference type="ChEBI" id="CHEBI:57692"/>
    </ligand>
</feature>
<feature type="binding site" evidence="1">
    <location>
        <position position="287"/>
    </location>
    <ligand>
        <name>FAD</name>
        <dbReference type="ChEBI" id="CHEBI:57692"/>
    </ligand>
</feature>
<feature type="binding site" evidence="1">
    <location>
        <position position="327"/>
    </location>
    <ligand>
        <name>FAD</name>
        <dbReference type="ChEBI" id="CHEBI:57692"/>
    </ligand>
</feature>
<organism>
    <name type="scientific">Wolbachia pipientis subsp. Culex pipiens (strain wPip)</name>
    <dbReference type="NCBI Taxonomy" id="570417"/>
    <lineage>
        <taxon>Bacteria</taxon>
        <taxon>Pseudomonadati</taxon>
        <taxon>Pseudomonadota</taxon>
        <taxon>Alphaproteobacteria</taxon>
        <taxon>Rickettsiales</taxon>
        <taxon>Anaplasmataceae</taxon>
        <taxon>Wolbachieae</taxon>
        <taxon>Wolbachia</taxon>
    </lineage>
</organism>
<evidence type="ECO:0000255" key="1">
    <source>
        <dbReference type="HAMAP-Rule" id="MF_01685"/>
    </source>
</evidence>
<keyword id="KW-0274">FAD</keyword>
<keyword id="KW-0285">Flavoprotein</keyword>
<keyword id="KW-0521">NADP</keyword>
<keyword id="KW-0560">Oxidoreductase</keyword>
<sequence length="334" mass="37109">METDIVIIGAGPIGIFTAFQAGMLDMRCHVIDVLDQAGGQCTALYSEKPIYDIPGYPVITAQKLIEQLMEQASPFEPVYHLSQKVEKISNNEGENFTIITNIGTEVKCKAVIIAAGNGMFEPNRPPLSGILEYENKSVFYSVNKISDFQDKTIVIAGGGDSAADWTVELSKVAKKIYVIHRRKEFRCTPETRNKLESLENDGKIELVVPYQLHELAGGNGQLRAVIVKNIASKEEREISADFLLPFFGLSMNLGPINNWGIELEHGRIIVDPATLRTSRDRIYAIGDIATYPDKLKLILNGFAESAMACYHIYKVIHNSPVNFQYSTSKGIHRN</sequence>
<reference key="1">
    <citation type="journal article" date="2008" name="Mol. Biol. Evol.">
        <title>Genome evolution of Wolbachia strain wPip from the Culex pipiens group.</title>
        <authorList>
            <person name="Klasson L."/>
            <person name="Walker T."/>
            <person name="Sebaihia M."/>
            <person name="Sanders M.J."/>
            <person name="Quail M.A."/>
            <person name="Lord A."/>
            <person name="Sanders S."/>
            <person name="Earl J."/>
            <person name="O'Neill S.L."/>
            <person name="Thomson N."/>
            <person name="Sinkins S.P."/>
            <person name="Parkhill J."/>
        </authorList>
    </citation>
    <scope>NUCLEOTIDE SEQUENCE [LARGE SCALE GENOMIC DNA]</scope>
    <source>
        <strain>wPip</strain>
    </source>
</reference>
<comment type="catalytic activity">
    <reaction evidence="1">
        <text>2 reduced [2Fe-2S]-[ferredoxin] + NADP(+) + H(+) = 2 oxidized [2Fe-2S]-[ferredoxin] + NADPH</text>
        <dbReference type="Rhea" id="RHEA:20125"/>
        <dbReference type="Rhea" id="RHEA-COMP:10000"/>
        <dbReference type="Rhea" id="RHEA-COMP:10001"/>
        <dbReference type="ChEBI" id="CHEBI:15378"/>
        <dbReference type="ChEBI" id="CHEBI:33737"/>
        <dbReference type="ChEBI" id="CHEBI:33738"/>
        <dbReference type="ChEBI" id="CHEBI:57783"/>
        <dbReference type="ChEBI" id="CHEBI:58349"/>
        <dbReference type="EC" id="1.18.1.2"/>
    </reaction>
</comment>
<comment type="cofactor">
    <cofactor evidence="1">
        <name>FAD</name>
        <dbReference type="ChEBI" id="CHEBI:57692"/>
    </cofactor>
    <text evidence="1">Binds 1 FAD per subunit.</text>
</comment>
<comment type="subunit">
    <text evidence="1">Homodimer.</text>
</comment>
<comment type="similarity">
    <text evidence="1">Belongs to the ferredoxin--NADP reductase type 2 family.</text>
</comment>
<proteinExistence type="inferred from homology"/>
<dbReference type="EC" id="1.18.1.2" evidence="1"/>
<dbReference type="EMBL" id="AM999887">
    <property type="protein sequence ID" value="CAQ55118.1"/>
    <property type="molecule type" value="Genomic_DNA"/>
</dbReference>
<dbReference type="RefSeq" id="WP_007302395.1">
    <property type="nucleotide sequence ID" value="NC_010981.1"/>
</dbReference>
<dbReference type="SMR" id="B3CMJ8"/>
<dbReference type="KEGG" id="wpi:WP1010"/>
<dbReference type="eggNOG" id="COG0492">
    <property type="taxonomic scope" value="Bacteria"/>
</dbReference>
<dbReference type="HOGENOM" id="CLU_031864_5_5_5"/>
<dbReference type="Proteomes" id="UP000008814">
    <property type="component" value="Chromosome"/>
</dbReference>
<dbReference type="GO" id="GO:0004324">
    <property type="term" value="F:ferredoxin-NADP+ reductase activity"/>
    <property type="evidence" value="ECO:0007669"/>
    <property type="project" value="UniProtKB-UniRule"/>
</dbReference>
<dbReference type="GO" id="GO:0050660">
    <property type="term" value="F:flavin adenine dinucleotide binding"/>
    <property type="evidence" value="ECO:0007669"/>
    <property type="project" value="UniProtKB-UniRule"/>
</dbReference>
<dbReference type="GO" id="GO:0050661">
    <property type="term" value="F:NADP binding"/>
    <property type="evidence" value="ECO:0007669"/>
    <property type="project" value="UniProtKB-UniRule"/>
</dbReference>
<dbReference type="Gene3D" id="3.50.50.60">
    <property type="entry name" value="FAD/NAD(P)-binding domain"/>
    <property type="match status" value="2"/>
</dbReference>
<dbReference type="HAMAP" id="MF_01685">
    <property type="entry name" value="FENR2"/>
    <property type="match status" value="1"/>
</dbReference>
<dbReference type="InterPro" id="IPR036188">
    <property type="entry name" value="FAD/NAD-bd_sf"/>
</dbReference>
<dbReference type="InterPro" id="IPR023753">
    <property type="entry name" value="FAD/NAD-binding_dom"/>
</dbReference>
<dbReference type="InterPro" id="IPR022890">
    <property type="entry name" value="Fd--NADP_Rdtase_type_2"/>
</dbReference>
<dbReference type="InterPro" id="IPR050097">
    <property type="entry name" value="Ferredoxin-NADP_redctase_2"/>
</dbReference>
<dbReference type="PANTHER" id="PTHR48105">
    <property type="entry name" value="THIOREDOXIN REDUCTASE 1-RELATED-RELATED"/>
    <property type="match status" value="1"/>
</dbReference>
<dbReference type="Pfam" id="PF07992">
    <property type="entry name" value="Pyr_redox_2"/>
    <property type="match status" value="1"/>
</dbReference>
<dbReference type="PRINTS" id="PR00368">
    <property type="entry name" value="FADPNR"/>
</dbReference>
<dbReference type="PRINTS" id="PR00469">
    <property type="entry name" value="PNDRDTASEII"/>
</dbReference>
<dbReference type="SUPFAM" id="SSF51905">
    <property type="entry name" value="FAD/NAD(P)-binding domain"/>
    <property type="match status" value="1"/>
</dbReference>
<name>FENR_WOLPP</name>